<comment type="similarity">
    <text evidence="1">Belongs to the UPF0339 family. Duplicated subfamily.</text>
</comment>
<comment type="sequence caution" evidence="1">
    <conflict type="erroneous initiation">
        <sequence resource="EMBL-CDS" id="AAC71704"/>
    </conflict>
</comment>
<protein>
    <recommendedName>
        <fullName>UPF0339 protein in ptx operon 5'region</fullName>
    </recommendedName>
    <alternativeName>
        <fullName>ORF117</fullName>
    </alternativeName>
</protein>
<dbReference type="EMBL" id="AF061070">
    <property type="protein sequence ID" value="AAC71704.1"/>
    <property type="status" value="ALT_INIT"/>
    <property type="molecule type" value="Genomic_DNA"/>
</dbReference>
<dbReference type="RefSeq" id="WP_003118434.1">
    <property type="nucleotide sequence ID" value="NZ_JAMOIC010000077.1"/>
</dbReference>
<dbReference type="SMR" id="O69049"/>
<dbReference type="OrthoDB" id="9802792at2"/>
<dbReference type="Gene3D" id="2.30.29.80">
    <property type="match status" value="1"/>
</dbReference>
<dbReference type="InterPro" id="IPR010879">
    <property type="entry name" value="DUF1508"/>
</dbReference>
<dbReference type="InterPro" id="IPR051141">
    <property type="entry name" value="UPF0339_domain"/>
</dbReference>
<dbReference type="InterPro" id="IPR036913">
    <property type="entry name" value="YegP-like_sf"/>
</dbReference>
<dbReference type="PANTHER" id="PTHR40606">
    <property type="match status" value="1"/>
</dbReference>
<dbReference type="PANTHER" id="PTHR40606:SF1">
    <property type="entry name" value="UPF0339 PROTEIN YEGP"/>
    <property type="match status" value="1"/>
</dbReference>
<dbReference type="Pfam" id="PF07411">
    <property type="entry name" value="DUF1508"/>
    <property type="match status" value="2"/>
</dbReference>
<dbReference type="SUPFAM" id="SSF160113">
    <property type="entry name" value="YegP-like"/>
    <property type="match status" value="2"/>
</dbReference>
<feature type="chain" id="PRO_0000218144" description="UPF0339 protein in ptx operon 5'region">
    <location>
        <begin position="1"/>
        <end position="111"/>
    </location>
</feature>
<feature type="repeat" description="1">
    <location>
        <begin position="10"/>
        <end position="58"/>
    </location>
</feature>
<feature type="repeat" description="2">
    <location>
        <begin position="61"/>
        <end position="109"/>
    </location>
</feature>
<proteinExistence type="inferred from homology"/>
<reference key="1">
    <citation type="journal article" date="1998" name="J. Bacteriol.">
        <title>Molecular genetic analysis of phosphite and hypophosphite oxidation by Pseudomonas stutzeri WM88.</title>
        <authorList>
            <person name="Metcalf W.W."/>
            <person name="Wolfe R.S."/>
        </authorList>
    </citation>
    <scope>NUCLEOTIDE SEQUENCE [GENOMIC DNA]</scope>
    <source>
        <strain>WM88</strain>
    </source>
</reference>
<accession>O69049</accession>
<name>YEGP_STUST</name>
<sequence length="111" mass="12019">MSGTFEIYNDKAGEFRFRLKANNGQAILASEGYKDKSGCLNGVESVKKNAPDDARYERKASGADKFMFNLKAGNHQVVGTSQSYASEASRDKGIESVKNHAPDAKVVEVGN</sequence>
<keyword id="KW-0677">Repeat</keyword>
<organism>
    <name type="scientific">Stutzerimonas stutzeri</name>
    <name type="common">Pseudomonas stutzeri</name>
    <dbReference type="NCBI Taxonomy" id="316"/>
    <lineage>
        <taxon>Bacteria</taxon>
        <taxon>Pseudomonadati</taxon>
        <taxon>Pseudomonadota</taxon>
        <taxon>Gammaproteobacteria</taxon>
        <taxon>Pseudomonadales</taxon>
        <taxon>Pseudomonadaceae</taxon>
        <taxon>Stutzerimonas</taxon>
    </lineage>
</organism>
<evidence type="ECO:0000305" key="1"/>